<proteinExistence type="inferred from homology"/>
<reference key="1">
    <citation type="submission" date="2007-02" db="EMBL/GenBank/DDBJ databases">
        <title>Complete sequence of chromosome of Yersinia pestis Pestoides F.</title>
        <authorList>
            <consortium name="US DOE Joint Genome Institute"/>
            <person name="Copeland A."/>
            <person name="Lucas S."/>
            <person name="Lapidus A."/>
            <person name="Barry K."/>
            <person name="Detter J.C."/>
            <person name="Glavina del Rio T."/>
            <person name="Hammon N."/>
            <person name="Israni S."/>
            <person name="Dalin E."/>
            <person name="Tice H."/>
            <person name="Pitluck S."/>
            <person name="Di Bartolo G."/>
            <person name="Chain P."/>
            <person name="Malfatti S."/>
            <person name="Shin M."/>
            <person name="Vergez L."/>
            <person name="Schmutz J."/>
            <person name="Larimer F."/>
            <person name="Land M."/>
            <person name="Hauser L."/>
            <person name="Worsham P."/>
            <person name="Chu M."/>
            <person name="Bearden S."/>
            <person name="Garcia E."/>
            <person name="Richardson P."/>
        </authorList>
    </citation>
    <scope>NUCLEOTIDE SEQUENCE [LARGE SCALE GENOMIC DNA]</scope>
    <source>
        <strain>Pestoides F</strain>
    </source>
</reference>
<comment type="function">
    <text evidence="1">This is one of the proteins that binds to the 5S RNA in the ribosome where it forms part of the central protuberance.</text>
</comment>
<comment type="subunit">
    <text evidence="1">Part of the 50S ribosomal subunit; part of the 5S rRNA/L5/L18/L25 subcomplex. Contacts the 5S rRNA. Binds to the 5S rRNA independently of L5 and L18.</text>
</comment>
<comment type="similarity">
    <text evidence="1">Belongs to the bacterial ribosomal protein bL25 family.</text>
</comment>
<keyword id="KW-0687">Ribonucleoprotein</keyword>
<keyword id="KW-0689">Ribosomal protein</keyword>
<keyword id="KW-0694">RNA-binding</keyword>
<keyword id="KW-0699">rRNA-binding</keyword>
<sequence length="94" mass="10406">MTTINVEVRNDQGKGASRRLRAANKFPAIVYGGSEAAISIALDHDTTKNLELKPGFYDSVLTLVIDGKETKVKVQAVQRHAFKPKLTHIDFVRV</sequence>
<dbReference type="EMBL" id="CP000668">
    <property type="protein sequence ID" value="ABP40805.1"/>
    <property type="molecule type" value="Genomic_DNA"/>
</dbReference>
<dbReference type="RefSeq" id="WP_002208834.1">
    <property type="nucleotide sequence ID" value="NZ_CP009715.1"/>
</dbReference>
<dbReference type="SMR" id="A4TNE3"/>
<dbReference type="GeneID" id="96664865"/>
<dbReference type="KEGG" id="ypp:YPDSF_2430"/>
<dbReference type="PATRIC" id="fig|386656.14.peg.3942"/>
<dbReference type="GO" id="GO:0022625">
    <property type="term" value="C:cytosolic large ribosomal subunit"/>
    <property type="evidence" value="ECO:0007669"/>
    <property type="project" value="TreeGrafter"/>
</dbReference>
<dbReference type="GO" id="GO:0008097">
    <property type="term" value="F:5S rRNA binding"/>
    <property type="evidence" value="ECO:0007669"/>
    <property type="project" value="InterPro"/>
</dbReference>
<dbReference type="GO" id="GO:0003735">
    <property type="term" value="F:structural constituent of ribosome"/>
    <property type="evidence" value="ECO:0007669"/>
    <property type="project" value="InterPro"/>
</dbReference>
<dbReference type="GO" id="GO:0006412">
    <property type="term" value="P:translation"/>
    <property type="evidence" value="ECO:0007669"/>
    <property type="project" value="UniProtKB-UniRule"/>
</dbReference>
<dbReference type="CDD" id="cd00495">
    <property type="entry name" value="Ribosomal_L25_TL5_CTC"/>
    <property type="match status" value="1"/>
</dbReference>
<dbReference type="FunFam" id="2.40.240.10:FF:000002">
    <property type="entry name" value="50S ribosomal protein L25"/>
    <property type="match status" value="1"/>
</dbReference>
<dbReference type="Gene3D" id="2.40.240.10">
    <property type="entry name" value="Ribosomal Protein L25, Chain P"/>
    <property type="match status" value="1"/>
</dbReference>
<dbReference type="HAMAP" id="MF_01336">
    <property type="entry name" value="Ribosomal_bL25"/>
    <property type="match status" value="1"/>
</dbReference>
<dbReference type="InterPro" id="IPR020056">
    <property type="entry name" value="Rbsml_bL25/Gln-tRNA_synth_N"/>
</dbReference>
<dbReference type="InterPro" id="IPR011035">
    <property type="entry name" value="Ribosomal_bL25/Gln-tRNA_synth"/>
</dbReference>
<dbReference type="InterPro" id="IPR020055">
    <property type="entry name" value="Ribosomal_bL25_short"/>
</dbReference>
<dbReference type="InterPro" id="IPR029751">
    <property type="entry name" value="Ribosomal_L25_dom"/>
</dbReference>
<dbReference type="InterPro" id="IPR020930">
    <property type="entry name" value="Ribosomal_uL5_bac-type"/>
</dbReference>
<dbReference type="NCBIfam" id="NF004612">
    <property type="entry name" value="PRK05943.1"/>
    <property type="match status" value="1"/>
</dbReference>
<dbReference type="PANTHER" id="PTHR33284">
    <property type="entry name" value="RIBOSOMAL PROTEIN L25/GLN-TRNA SYNTHETASE, ANTI-CODON-BINDING DOMAIN-CONTAINING PROTEIN"/>
    <property type="match status" value="1"/>
</dbReference>
<dbReference type="PANTHER" id="PTHR33284:SF1">
    <property type="entry name" value="RIBOSOMAL PROTEIN L25_GLN-TRNA SYNTHETASE, ANTI-CODON-BINDING DOMAIN-CONTAINING PROTEIN"/>
    <property type="match status" value="1"/>
</dbReference>
<dbReference type="Pfam" id="PF01386">
    <property type="entry name" value="Ribosomal_L25p"/>
    <property type="match status" value="1"/>
</dbReference>
<dbReference type="SUPFAM" id="SSF50715">
    <property type="entry name" value="Ribosomal protein L25-like"/>
    <property type="match status" value="1"/>
</dbReference>
<accession>A4TNE3</accession>
<organism>
    <name type="scientific">Yersinia pestis (strain Pestoides F)</name>
    <dbReference type="NCBI Taxonomy" id="386656"/>
    <lineage>
        <taxon>Bacteria</taxon>
        <taxon>Pseudomonadati</taxon>
        <taxon>Pseudomonadota</taxon>
        <taxon>Gammaproteobacteria</taxon>
        <taxon>Enterobacterales</taxon>
        <taxon>Yersiniaceae</taxon>
        <taxon>Yersinia</taxon>
    </lineage>
</organism>
<name>RL25_YERPP</name>
<gene>
    <name evidence="1" type="primary">rplY</name>
    <name type="ordered locus">YPDSF_2430</name>
</gene>
<evidence type="ECO:0000255" key="1">
    <source>
        <dbReference type="HAMAP-Rule" id="MF_01336"/>
    </source>
</evidence>
<evidence type="ECO:0000305" key="2"/>
<feature type="chain" id="PRO_1000052976" description="Large ribosomal subunit protein bL25">
    <location>
        <begin position="1"/>
        <end position="94"/>
    </location>
</feature>
<protein>
    <recommendedName>
        <fullName evidence="1">Large ribosomal subunit protein bL25</fullName>
    </recommendedName>
    <alternativeName>
        <fullName evidence="2">50S ribosomal protein L25</fullName>
    </alternativeName>
</protein>